<evidence type="ECO:0000269" key="1">
    <source>
    </source>
</evidence>
<evidence type="ECO:0000305" key="2"/>
<evidence type="ECO:0000312" key="3">
    <source>
        <dbReference type="EMBL" id="BAS83821.1"/>
    </source>
</evidence>
<name>NAS2_ORYSJ</name>
<accession>Q10MI9</accession>
<accession>A0A0P0VWJ2</accession>
<accession>A3AH72</accession>
<accession>Q9FEG8</accession>
<feature type="chain" id="PRO_0000212715" description="Nicotianamine synthase 2">
    <location>
        <begin position="1"/>
        <end position="326"/>
    </location>
</feature>
<feature type="sequence conflict" description="In Ref. 1; ABF95537 and 2; BAF11808." ref="1 2">
    <original>A</original>
    <variation>T</variation>
    <location>
        <position position="9"/>
    </location>
</feature>
<organism>
    <name type="scientific">Oryza sativa subsp. japonica</name>
    <name type="common">Rice</name>
    <dbReference type="NCBI Taxonomy" id="39947"/>
    <lineage>
        <taxon>Eukaryota</taxon>
        <taxon>Viridiplantae</taxon>
        <taxon>Streptophyta</taxon>
        <taxon>Embryophyta</taxon>
        <taxon>Tracheophyta</taxon>
        <taxon>Spermatophyta</taxon>
        <taxon>Magnoliopsida</taxon>
        <taxon>Liliopsida</taxon>
        <taxon>Poales</taxon>
        <taxon>Poaceae</taxon>
        <taxon>BOP clade</taxon>
        <taxon>Oryzoideae</taxon>
        <taxon>Oryzeae</taxon>
        <taxon>Oryzinae</taxon>
        <taxon>Oryza</taxon>
        <taxon>Oryza sativa</taxon>
    </lineage>
</organism>
<sequence>MEAQNQEVAALVEKIAGLHAAISKLPSLSPSAEVDALFTDLVTACVPASPVDVAKLGPEAQAMREELIRLCSAAEGHLEAHYADMLAAFDNPLDHLARFPYYGNYVNLSKLEYDLLVRYVPGIAPTRVAFVGSGPLPFSSLVLAAHHLPDAVFDNYDRCGAANERARRLFRGADEGLGARMAFHTADVATLTGELGAYDVVFLAALVGMAAEEKAGVIAHLGAHMADGAALVVRSAHGARGFLYPIVDLEDIRRGGFDVLAVYHPDDEVINSVIVARKADPRRGGGLAGARGAVPVVSPPCKCCKMEAAAGAFQKAEEFAAKRLSV</sequence>
<keyword id="KW-1185">Reference proteome</keyword>
<keyword id="KW-0949">S-adenosyl-L-methionine</keyword>
<keyword id="KW-0808">Transferase</keyword>
<comment type="function">
    <text evidence="1">Synthesizes nicotianamine, a polyamine that is the first intermediate in the synthesis of the phytosiderophores of the mugineic acid type found in gramineae which serve as a sensor for the physiological iron status within the plant, and/or might be involved in the transport of iron.</text>
</comment>
<comment type="catalytic activity">
    <reaction>
        <text>3 S-adenosyl-L-methionine = nicotianamine + 3 S-methyl-5'-thioadenosine + 3 H(+)</text>
        <dbReference type="Rhea" id="RHEA:16481"/>
        <dbReference type="ChEBI" id="CHEBI:15378"/>
        <dbReference type="ChEBI" id="CHEBI:17509"/>
        <dbReference type="ChEBI" id="CHEBI:58249"/>
        <dbReference type="ChEBI" id="CHEBI:59789"/>
        <dbReference type="EC" id="2.5.1.43"/>
    </reaction>
</comment>
<comment type="tissue specificity">
    <text evidence="1">Expressed in roots.</text>
</comment>
<comment type="induction">
    <text evidence="1">By iron deficiency in roots and chlorotic leaves.</text>
</comment>
<comment type="similarity">
    <text evidence="2">Belongs to the nicotianamine synthase (NAS)-like family.</text>
</comment>
<protein>
    <recommendedName>
        <fullName>Nicotianamine synthase 2</fullName>
        <ecNumber>2.5.1.43</ecNumber>
    </recommendedName>
    <alternativeName>
        <fullName>S-adenosyl-L-methionine:S-adenosyl-L-methionine:S-adenosyl-methionine 3-amino-3-carboxypropyltransferase 2</fullName>
        <shortName>OsNAS2</shortName>
    </alternativeName>
</protein>
<gene>
    <name type="primary">NAS2</name>
    <name evidence="3" type="ordered locus">Os03g0307200</name>
    <name evidence="2" type="ordered locus">LOC_Os03g19420</name>
    <name type="ORF">OsJ_010144</name>
</gene>
<dbReference type="EC" id="2.5.1.43"/>
<dbReference type="EMBL" id="DP000009">
    <property type="protein sequence ID" value="ABF95537.1"/>
    <property type="molecule type" value="Genomic_DNA"/>
</dbReference>
<dbReference type="EMBL" id="AP008209">
    <property type="protein sequence ID" value="BAF11808.1"/>
    <property type="molecule type" value="Genomic_DNA"/>
</dbReference>
<dbReference type="EMBL" id="AP014959">
    <property type="protein sequence ID" value="BAS83821.1"/>
    <property type="molecule type" value="Genomic_DNA"/>
</dbReference>
<dbReference type="EMBL" id="CM000140">
    <property type="protein sequence ID" value="EAZ26661.1"/>
    <property type="molecule type" value="Genomic_DNA"/>
</dbReference>
<dbReference type="EMBL" id="AK112011">
    <property type="status" value="NOT_ANNOTATED_CDS"/>
    <property type="molecule type" value="mRNA"/>
</dbReference>
<dbReference type="RefSeq" id="XP_015630628.1">
    <property type="nucleotide sequence ID" value="XM_015775142.1"/>
</dbReference>
<dbReference type="SMR" id="Q10MI9"/>
<dbReference type="FunCoup" id="Q10MI9">
    <property type="interactions" value="95"/>
</dbReference>
<dbReference type="STRING" id="39947.Q10MI9"/>
<dbReference type="PaxDb" id="39947-Q10MI9"/>
<dbReference type="EnsemblPlants" id="Os03t0307200-01">
    <property type="protein sequence ID" value="Os03t0307200-01"/>
    <property type="gene ID" value="Os03g0307200"/>
</dbReference>
<dbReference type="Gramene" id="Os03t0307200-01">
    <property type="protein sequence ID" value="Os03t0307200-01"/>
    <property type="gene ID" value="Os03g0307200"/>
</dbReference>
<dbReference type="KEGG" id="dosa:Os03g0307200"/>
<dbReference type="eggNOG" id="ENOG502QTU6">
    <property type="taxonomic scope" value="Eukaryota"/>
</dbReference>
<dbReference type="HOGENOM" id="CLU_031919_0_0_1"/>
<dbReference type="InParanoid" id="Q10MI9"/>
<dbReference type="OMA" id="NNRGMEK"/>
<dbReference type="OrthoDB" id="586689at2759"/>
<dbReference type="BRENDA" id="2.5.1.43">
    <property type="organism ID" value="4460"/>
</dbReference>
<dbReference type="PlantReactome" id="R-OSA-9025754">
    <property type="pathway name" value="Mugineic acid biosynthesis"/>
</dbReference>
<dbReference type="Proteomes" id="UP000000763">
    <property type="component" value="Chromosome 3"/>
</dbReference>
<dbReference type="Proteomes" id="UP000007752">
    <property type="component" value="Chromosome 3"/>
</dbReference>
<dbReference type="Proteomes" id="UP000059680">
    <property type="component" value="Chromosome 3"/>
</dbReference>
<dbReference type="GO" id="GO:0030410">
    <property type="term" value="F:nicotianamine synthase activity"/>
    <property type="evidence" value="ECO:0007669"/>
    <property type="project" value="UniProtKB-EC"/>
</dbReference>
<dbReference type="GO" id="GO:0030418">
    <property type="term" value="P:nicotianamine biosynthetic process"/>
    <property type="evidence" value="ECO:0007669"/>
    <property type="project" value="InterPro"/>
</dbReference>
<dbReference type="Gene3D" id="3.40.50.150">
    <property type="entry name" value="Vaccinia Virus protein VP39"/>
    <property type="match status" value="1"/>
</dbReference>
<dbReference type="InterPro" id="IPR004298">
    <property type="entry name" value="Nicotian_synth"/>
</dbReference>
<dbReference type="InterPro" id="IPR029063">
    <property type="entry name" value="SAM-dependent_MTases_sf"/>
</dbReference>
<dbReference type="PANTHER" id="PTHR32266:SF10">
    <property type="entry name" value="NICOTIANAMINE SYNTHASE 2"/>
    <property type="match status" value="1"/>
</dbReference>
<dbReference type="PANTHER" id="PTHR32266">
    <property type="entry name" value="NICOTIANAMINE SYNTHASE 3"/>
    <property type="match status" value="1"/>
</dbReference>
<dbReference type="Pfam" id="PF03059">
    <property type="entry name" value="NAS"/>
    <property type="match status" value="1"/>
</dbReference>
<dbReference type="SUPFAM" id="SSF53335">
    <property type="entry name" value="S-adenosyl-L-methionine-dependent methyltransferases"/>
    <property type="match status" value="1"/>
</dbReference>
<dbReference type="PROSITE" id="PS51142">
    <property type="entry name" value="NAS"/>
    <property type="match status" value="1"/>
</dbReference>
<reference key="1">
    <citation type="journal article" date="2005" name="Genome Res.">
        <title>Sequence, annotation, and analysis of synteny between rice chromosome 3 and diverged grass species.</title>
        <authorList>
            <consortium name="The rice chromosome 3 sequencing consortium"/>
            <person name="Buell C.R."/>
            <person name="Yuan Q."/>
            <person name="Ouyang S."/>
            <person name="Liu J."/>
            <person name="Zhu W."/>
            <person name="Wang A."/>
            <person name="Maiti R."/>
            <person name="Haas B."/>
            <person name="Wortman J."/>
            <person name="Pertea M."/>
            <person name="Jones K.M."/>
            <person name="Kim M."/>
            <person name="Overton L."/>
            <person name="Tsitrin T."/>
            <person name="Fadrosh D."/>
            <person name="Bera J."/>
            <person name="Weaver B."/>
            <person name="Jin S."/>
            <person name="Johri S."/>
            <person name="Reardon M."/>
            <person name="Webb K."/>
            <person name="Hill J."/>
            <person name="Moffat K."/>
            <person name="Tallon L."/>
            <person name="Van Aken S."/>
            <person name="Lewis M."/>
            <person name="Utterback T."/>
            <person name="Feldblyum T."/>
            <person name="Zismann V."/>
            <person name="Iobst S."/>
            <person name="Hsiao J."/>
            <person name="de Vazeille A.R."/>
            <person name="Salzberg S.L."/>
            <person name="White O."/>
            <person name="Fraser C.M."/>
            <person name="Yu Y."/>
            <person name="Kim H."/>
            <person name="Rambo T."/>
            <person name="Currie J."/>
            <person name="Collura K."/>
            <person name="Kernodle-Thompson S."/>
            <person name="Wei F."/>
            <person name="Kudrna K."/>
            <person name="Ammiraju J.S.S."/>
            <person name="Luo M."/>
            <person name="Goicoechea J.L."/>
            <person name="Wing R.A."/>
            <person name="Henry D."/>
            <person name="Oates R."/>
            <person name="Palmer M."/>
            <person name="Pries G."/>
            <person name="Saski C."/>
            <person name="Simmons J."/>
            <person name="Soderlund C."/>
            <person name="Nelson W."/>
            <person name="de la Bastide M."/>
            <person name="Spiegel L."/>
            <person name="Nascimento L."/>
            <person name="Huang E."/>
            <person name="Preston R."/>
            <person name="Zutavern T."/>
            <person name="Palmer L."/>
            <person name="O'Shaughnessy A."/>
            <person name="Dike S."/>
            <person name="McCombie W.R."/>
            <person name="Minx P."/>
            <person name="Cordum H."/>
            <person name="Wilson R."/>
            <person name="Jin W."/>
            <person name="Lee H.R."/>
            <person name="Jiang J."/>
            <person name="Jackson S."/>
        </authorList>
    </citation>
    <scope>NUCLEOTIDE SEQUENCE [LARGE SCALE GENOMIC DNA]</scope>
    <source>
        <strain>cv. Nipponbare</strain>
    </source>
</reference>
<reference key="2">
    <citation type="journal article" date="2005" name="Nature">
        <title>The map-based sequence of the rice genome.</title>
        <authorList>
            <consortium name="International rice genome sequencing project (IRGSP)"/>
        </authorList>
    </citation>
    <scope>NUCLEOTIDE SEQUENCE [LARGE SCALE GENOMIC DNA]</scope>
    <source>
        <strain>cv. Nipponbare</strain>
    </source>
</reference>
<reference key="3">
    <citation type="journal article" date="2008" name="Nucleic Acids Res.">
        <title>The rice annotation project database (RAP-DB): 2008 update.</title>
        <authorList>
            <consortium name="The rice annotation project (RAP)"/>
        </authorList>
    </citation>
    <scope>GENOME REANNOTATION</scope>
    <source>
        <strain>cv. Nipponbare</strain>
    </source>
</reference>
<reference key="4">
    <citation type="journal article" date="2013" name="Rice">
        <title>Improvement of the Oryza sativa Nipponbare reference genome using next generation sequence and optical map data.</title>
        <authorList>
            <person name="Kawahara Y."/>
            <person name="de la Bastide M."/>
            <person name="Hamilton J.P."/>
            <person name="Kanamori H."/>
            <person name="McCombie W.R."/>
            <person name="Ouyang S."/>
            <person name="Schwartz D.C."/>
            <person name="Tanaka T."/>
            <person name="Wu J."/>
            <person name="Zhou S."/>
            <person name="Childs K.L."/>
            <person name="Davidson R.M."/>
            <person name="Lin H."/>
            <person name="Quesada-Ocampo L."/>
            <person name="Vaillancourt B."/>
            <person name="Sakai H."/>
            <person name="Lee S.S."/>
            <person name="Kim J."/>
            <person name="Numa H."/>
            <person name="Itoh T."/>
            <person name="Buell C.R."/>
            <person name="Matsumoto T."/>
        </authorList>
    </citation>
    <scope>GENOME REANNOTATION</scope>
    <source>
        <strain>cv. Nipponbare</strain>
    </source>
</reference>
<reference key="5">
    <citation type="journal article" date="2005" name="PLoS Biol.">
        <title>The genomes of Oryza sativa: a history of duplications.</title>
        <authorList>
            <person name="Yu J."/>
            <person name="Wang J."/>
            <person name="Lin W."/>
            <person name="Li S."/>
            <person name="Li H."/>
            <person name="Zhou J."/>
            <person name="Ni P."/>
            <person name="Dong W."/>
            <person name="Hu S."/>
            <person name="Zeng C."/>
            <person name="Zhang J."/>
            <person name="Zhang Y."/>
            <person name="Li R."/>
            <person name="Xu Z."/>
            <person name="Li S."/>
            <person name="Li X."/>
            <person name="Zheng H."/>
            <person name="Cong L."/>
            <person name="Lin L."/>
            <person name="Yin J."/>
            <person name="Geng J."/>
            <person name="Li G."/>
            <person name="Shi J."/>
            <person name="Liu J."/>
            <person name="Lv H."/>
            <person name="Li J."/>
            <person name="Wang J."/>
            <person name="Deng Y."/>
            <person name="Ran L."/>
            <person name="Shi X."/>
            <person name="Wang X."/>
            <person name="Wu Q."/>
            <person name="Li C."/>
            <person name="Ren X."/>
            <person name="Wang J."/>
            <person name="Wang X."/>
            <person name="Li D."/>
            <person name="Liu D."/>
            <person name="Zhang X."/>
            <person name="Ji Z."/>
            <person name="Zhao W."/>
            <person name="Sun Y."/>
            <person name="Zhang Z."/>
            <person name="Bao J."/>
            <person name="Han Y."/>
            <person name="Dong L."/>
            <person name="Ji J."/>
            <person name="Chen P."/>
            <person name="Wu S."/>
            <person name="Liu J."/>
            <person name="Xiao Y."/>
            <person name="Bu D."/>
            <person name="Tan J."/>
            <person name="Yang L."/>
            <person name="Ye C."/>
            <person name="Zhang J."/>
            <person name="Xu J."/>
            <person name="Zhou Y."/>
            <person name="Yu Y."/>
            <person name="Zhang B."/>
            <person name="Zhuang S."/>
            <person name="Wei H."/>
            <person name="Liu B."/>
            <person name="Lei M."/>
            <person name="Yu H."/>
            <person name="Li Y."/>
            <person name="Xu H."/>
            <person name="Wei S."/>
            <person name="He X."/>
            <person name="Fang L."/>
            <person name="Zhang Z."/>
            <person name="Zhang Y."/>
            <person name="Huang X."/>
            <person name="Su Z."/>
            <person name="Tong W."/>
            <person name="Li J."/>
            <person name="Tong Z."/>
            <person name="Li S."/>
            <person name="Ye J."/>
            <person name="Wang L."/>
            <person name="Fang L."/>
            <person name="Lei T."/>
            <person name="Chen C.-S."/>
            <person name="Chen H.-C."/>
            <person name="Xu Z."/>
            <person name="Li H."/>
            <person name="Huang H."/>
            <person name="Zhang F."/>
            <person name="Xu H."/>
            <person name="Li N."/>
            <person name="Zhao C."/>
            <person name="Li S."/>
            <person name="Dong L."/>
            <person name="Huang Y."/>
            <person name="Li L."/>
            <person name="Xi Y."/>
            <person name="Qi Q."/>
            <person name="Li W."/>
            <person name="Zhang B."/>
            <person name="Hu W."/>
            <person name="Zhang Y."/>
            <person name="Tian X."/>
            <person name="Jiao Y."/>
            <person name="Liang X."/>
            <person name="Jin J."/>
            <person name="Gao L."/>
            <person name="Zheng W."/>
            <person name="Hao B."/>
            <person name="Liu S.-M."/>
            <person name="Wang W."/>
            <person name="Yuan L."/>
            <person name="Cao M."/>
            <person name="McDermott J."/>
            <person name="Samudrala R."/>
            <person name="Wang J."/>
            <person name="Wong G.K.-S."/>
            <person name="Yang H."/>
        </authorList>
    </citation>
    <scope>NUCLEOTIDE SEQUENCE [LARGE SCALE GENOMIC DNA]</scope>
    <source>
        <strain>cv. Nipponbare</strain>
    </source>
</reference>
<reference key="6">
    <citation type="journal article" date="2003" name="Science">
        <title>Collection, mapping, and annotation of over 28,000 cDNA clones from japonica rice.</title>
        <authorList>
            <consortium name="The rice full-length cDNA consortium"/>
        </authorList>
    </citation>
    <scope>NUCLEOTIDE SEQUENCE [LARGE SCALE MRNA]</scope>
    <source>
        <strain>cv. Nipponbare</strain>
    </source>
</reference>
<reference key="7">
    <citation type="journal article" date="2003" name="Plant J.">
        <title>Three rice nicotianamine synthase genes, OsNAS1, OsNAS2, and OsNAS3 are expressed in cells involved in long-distance transport of iron and differentially regulated by iron.</title>
        <authorList>
            <person name="Inoue H."/>
            <person name="Higuchi K."/>
            <person name="Takahashi M."/>
            <person name="Nakanishi H."/>
            <person name="Mori S."/>
            <person name="Nishizawa N.K."/>
        </authorList>
    </citation>
    <scope>FUNCTION</scope>
    <scope>TISSUE SPECIFICITY</scope>
    <scope>INDUCTION</scope>
</reference>
<proteinExistence type="evidence at transcript level"/>